<reference key="1">
    <citation type="submission" date="1994-09" db="EMBL/GenBank/DDBJ databases">
        <authorList>
            <person name="Turlin E."/>
            <person name="Gasser F."/>
            <person name="Biville F."/>
        </authorList>
    </citation>
    <scope>NUCLEOTIDE SEQUENCE [GENOMIC DNA]</scope>
    <source>
        <strain>K12</strain>
    </source>
</reference>
<reference key="2">
    <citation type="journal article" date="1997" name="DNA Res.">
        <title>Construction of a contiguous 874-kb sequence of the Escherichia coli-K12 genome corresponding to 50.0-68.8 min on the linkage map and analysis of its sequence features.</title>
        <authorList>
            <person name="Yamamoto Y."/>
            <person name="Aiba H."/>
            <person name="Baba T."/>
            <person name="Hayashi K."/>
            <person name="Inada T."/>
            <person name="Isono K."/>
            <person name="Itoh T."/>
            <person name="Kimura S."/>
            <person name="Kitagawa M."/>
            <person name="Makino K."/>
            <person name="Miki T."/>
            <person name="Mitsuhashi N."/>
            <person name="Mizobuchi K."/>
            <person name="Mori H."/>
            <person name="Nakade S."/>
            <person name="Nakamura Y."/>
            <person name="Nashimoto H."/>
            <person name="Oshima T."/>
            <person name="Oyama S."/>
            <person name="Saito N."/>
            <person name="Sampei G."/>
            <person name="Satoh Y."/>
            <person name="Sivasundaram S."/>
            <person name="Tagami H."/>
            <person name="Takahashi H."/>
            <person name="Takeda J."/>
            <person name="Takemoto K."/>
            <person name="Uehara K."/>
            <person name="Wada C."/>
            <person name="Yamagata S."/>
            <person name="Horiuchi T."/>
        </authorList>
    </citation>
    <scope>NUCLEOTIDE SEQUENCE [LARGE SCALE GENOMIC DNA]</scope>
    <source>
        <strain>K12 / W3110 / ATCC 27325 / DSM 5911</strain>
    </source>
</reference>
<reference key="3">
    <citation type="journal article" date="1997" name="Science">
        <title>The complete genome sequence of Escherichia coli K-12.</title>
        <authorList>
            <person name="Blattner F.R."/>
            <person name="Plunkett G. III"/>
            <person name="Bloch C.A."/>
            <person name="Perna N.T."/>
            <person name="Burland V."/>
            <person name="Riley M."/>
            <person name="Collado-Vides J."/>
            <person name="Glasner J.D."/>
            <person name="Rode C.K."/>
            <person name="Mayhew G.F."/>
            <person name="Gregor J."/>
            <person name="Davis N.W."/>
            <person name="Kirkpatrick H.A."/>
            <person name="Goeden M.A."/>
            <person name="Rose D.J."/>
            <person name="Mau B."/>
            <person name="Shao Y."/>
        </authorList>
    </citation>
    <scope>NUCLEOTIDE SEQUENCE [LARGE SCALE GENOMIC DNA]</scope>
    <source>
        <strain>K12 / MG1655 / ATCC 47076</strain>
    </source>
</reference>
<reference key="4">
    <citation type="journal article" date="2006" name="Mol. Syst. Biol.">
        <title>Highly accurate genome sequences of Escherichia coli K-12 strains MG1655 and W3110.</title>
        <authorList>
            <person name="Hayashi K."/>
            <person name="Morooka N."/>
            <person name="Yamamoto Y."/>
            <person name="Fujita K."/>
            <person name="Isono K."/>
            <person name="Choi S."/>
            <person name="Ohtsubo E."/>
            <person name="Baba T."/>
            <person name="Wanner B.L."/>
            <person name="Mori H."/>
            <person name="Horiuchi T."/>
        </authorList>
    </citation>
    <scope>NUCLEOTIDE SEQUENCE [LARGE SCALE GENOMIC DNA]</scope>
    <source>
        <strain>K12 / W3110 / ATCC 27325 / DSM 5911</strain>
    </source>
</reference>
<reference key="5">
    <citation type="journal article" date="1998" name="J. Bacteriol.">
        <title>Characterization of the hca cluster encoding the dioxygenolytic pathway for initial catabolism of 3-phenylpropionic acid in Escherichia coli K-12.</title>
        <authorList>
            <person name="Diaz E."/>
            <person name="Ferrandez A."/>
            <person name="Garcia J.L."/>
        </authorList>
    </citation>
    <scope>FUNCTION IN CATABOLISM OF PHENYLPROPIONIC AND CINNAMIC ACIDS</scope>
    <source>
        <strain>K12 / MC1061 / ATCC 53338 / DSM 7140</strain>
    </source>
</reference>
<keyword id="KW-0001">2Fe-2S</keyword>
<keyword id="KW-0002">3D-structure</keyword>
<keyword id="KW-0058">Aromatic hydrocarbons catabolism</keyword>
<keyword id="KW-0223">Dioxygenase</keyword>
<keyword id="KW-0408">Iron</keyword>
<keyword id="KW-0411">Iron-sulfur</keyword>
<keyword id="KW-0479">Metal-binding</keyword>
<keyword id="KW-0520">NAD</keyword>
<keyword id="KW-0560">Oxidoreductase</keyword>
<keyword id="KW-1185">Reference proteome</keyword>
<comment type="function">
    <text evidence="2">Part of the multicomponent 3-phenylpropionate dioxygenase. Converts 3-phenylpropionic acid (PP) and cinnamic acid (CI) into 3-phenylpropionate-dihydrodiol (PP-dihydrodiol) and cinnamic acid-dihydrodiol (CI-dihydrodiol), respectively.</text>
</comment>
<comment type="catalytic activity">
    <reaction>
        <text>3-phenylpropanoate + NADH + O2 + H(+) = 3-(cis-5,6-dihydroxycyclohexa-1,3-dien-1-yl)propanoate + NAD(+)</text>
        <dbReference type="Rhea" id="RHEA:20357"/>
        <dbReference type="ChEBI" id="CHEBI:15378"/>
        <dbReference type="ChEBI" id="CHEBI:15379"/>
        <dbReference type="ChEBI" id="CHEBI:51057"/>
        <dbReference type="ChEBI" id="CHEBI:57540"/>
        <dbReference type="ChEBI" id="CHEBI:57945"/>
        <dbReference type="ChEBI" id="CHEBI:60087"/>
        <dbReference type="EC" id="1.14.12.19"/>
    </reaction>
</comment>
<comment type="catalytic activity">
    <reaction>
        <text>(E)-cinnamate + NADH + O2 + H(+) = (2E)-3-(cis-5,6-dihydroxycyclohexa-1,3-dien-1-yl)prop-2-enoate + NAD(+)</text>
        <dbReference type="Rhea" id="RHEA:25058"/>
        <dbReference type="ChEBI" id="CHEBI:15378"/>
        <dbReference type="ChEBI" id="CHEBI:15379"/>
        <dbReference type="ChEBI" id="CHEBI:15669"/>
        <dbReference type="ChEBI" id="CHEBI:57540"/>
        <dbReference type="ChEBI" id="CHEBI:57945"/>
        <dbReference type="ChEBI" id="CHEBI:61451"/>
        <dbReference type="EC" id="1.14.12.19"/>
    </reaction>
</comment>
<comment type="cofactor">
    <cofactor evidence="3">
        <name>[2Fe-2S] cluster</name>
        <dbReference type="ChEBI" id="CHEBI:190135"/>
    </cofactor>
    <text evidence="3">Binds 1 [2Fe-2S] cluster.</text>
</comment>
<comment type="cofactor">
    <cofactor evidence="3">
        <name>Fe cation</name>
        <dbReference type="ChEBI" id="CHEBI:24875"/>
    </cofactor>
    <text evidence="3">Binds 1 Fe cation.</text>
</comment>
<comment type="pathway">
    <text>Aromatic compound metabolism; 3-phenylpropanoate degradation.</text>
</comment>
<comment type="subunit">
    <text>This dioxygenase system consists of four proteins: the two subunits of the hydroxylase component (HcaE and HcaF), a ferredoxin (HcaC) and a ferredoxin reductase (HcaD).</text>
</comment>
<comment type="similarity">
    <text evidence="3">Belongs to the bacterial ring-hydroxylating dioxygenase alpha subunit family.</text>
</comment>
<organism>
    <name type="scientific">Escherichia coli (strain K12)</name>
    <dbReference type="NCBI Taxonomy" id="83333"/>
    <lineage>
        <taxon>Bacteria</taxon>
        <taxon>Pseudomonadati</taxon>
        <taxon>Pseudomonadota</taxon>
        <taxon>Gammaproteobacteria</taxon>
        <taxon>Enterobacterales</taxon>
        <taxon>Enterobacteriaceae</taxon>
        <taxon>Escherichia</taxon>
    </lineage>
</organism>
<protein>
    <recommendedName>
        <fullName>3-phenylpropionate/cinnamic acid dioxygenase subunit alpha</fullName>
        <ecNumber>1.14.12.19</ecNumber>
    </recommendedName>
</protein>
<accession>P0ABR5</accession>
<accession>P77590</accession>
<accession>P78203</accession>
<accession>Q47139</accession>
<evidence type="ECO:0000250" key="1"/>
<evidence type="ECO:0000269" key="2">
    <source>
    </source>
</evidence>
<evidence type="ECO:0000305" key="3"/>
<proteinExistence type="evidence at protein level"/>
<gene>
    <name type="primary">hcaE</name>
    <name type="synonym">digA</name>
    <name type="synonym">hcaA</name>
    <name type="synonym">hcaA1</name>
    <name type="synonym">phdC1</name>
    <name type="synonym">yfhU</name>
    <name type="ordered locus">b2538</name>
    <name type="ordered locus">JW2522</name>
</gene>
<dbReference type="EC" id="1.14.12.19"/>
<dbReference type="EMBL" id="Z37966">
    <property type="protein sequence ID" value="CAA86018.1"/>
    <property type="molecule type" value="Genomic_DNA"/>
</dbReference>
<dbReference type="EMBL" id="U00096">
    <property type="protein sequence ID" value="AAC75591.1"/>
    <property type="molecule type" value="Genomic_DNA"/>
</dbReference>
<dbReference type="EMBL" id="AP009048">
    <property type="protein sequence ID" value="BAA16441.1"/>
    <property type="molecule type" value="Genomic_DNA"/>
</dbReference>
<dbReference type="PIR" id="A65031">
    <property type="entry name" value="A65031"/>
</dbReference>
<dbReference type="RefSeq" id="NP_417033.1">
    <property type="nucleotide sequence ID" value="NC_000913.3"/>
</dbReference>
<dbReference type="RefSeq" id="WP_000211172.1">
    <property type="nucleotide sequence ID" value="NZ_STEB01000011.1"/>
</dbReference>
<dbReference type="PDB" id="8K0A">
    <property type="method" value="EM"/>
    <property type="resolution" value="3.12 A"/>
    <property type="chains" value="A/C/E=1-453"/>
</dbReference>
<dbReference type="PDBsum" id="8K0A"/>
<dbReference type="EMDB" id="EMD-36758"/>
<dbReference type="SMR" id="P0ABR5"/>
<dbReference type="BioGRID" id="4261577">
    <property type="interactions" value="19"/>
</dbReference>
<dbReference type="ComplexPortal" id="CPX-5161">
    <property type="entry name" value="3-phenylpropionate/cinnamic acid dioxygenase"/>
</dbReference>
<dbReference type="FunCoup" id="P0ABR5">
    <property type="interactions" value="122"/>
</dbReference>
<dbReference type="IntAct" id="P0ABR5">
    <property type="interactions" value="5"/>
</dbReference>
<dbReference type="STRING" id="511145.b2538"/>
<dbReference type="PaxDb" id="511145-b2538"/>
<dbReference type="EnsemblBacteria" id="AAC75591">
    <property type="protein sequence ID" value="AAC75591"/>
    <property type="gene ID" value="b2538"/>
</dbReference>
<dbReference type="GeneID" id="93774598"/>
<dbReference type="GeneID" id="946998"/>
<dbReference type="KEGG" id="ecj:JW2522"/>
<dbReference type="KEGG" id="eco:b2538"/>
<dbReference type="KEGG" id="ecoc:C3026_14060"/>
<dbReference type="PATRIC" id="fig|1411691.4.peg.4196"/>
<dbReference type="EchoBASE" id="EB3229"/>
<dbReference type="eggNOG" id="COG4638">
    <property type="taxonomic scope" value="Bacteria"/>
</dbReference>
<dbReference type="HOGENOM" id="CLU_026244_4_0_6"/>
<dbReference type="InParanoid" id="P0ABR5"/>
<dbReference type="OMA" id="AQVGYNE"/>
<dbReference type="OrthoDB" id="9769355at2"/>
<dbReference type="PhylomeDB" id="P0ABR5"/>
<dbReference type="BioCyc" id="EcoCyc:PHENYLPRODIOXY-MONOMER"/>
<dbReference type="BioCyc" id="MetaCyc:PHENYLPRODIOXY-MONOMER"/>
<dbReference type="UniPathway" id="UPA00714"/>
<dbReference type="PRO" id="PR:P0ABR5"/>
<dbReference type="Proteomes" id="UP000000625">
    <property type="component" value="Chromosome"/>
</dbReference>
<dbReference type="GO" id="GO:0009334">
    <property type="term" value="C:3-phenylpropionate dioxygenase complex"/>
    <property type="evidence" value="ECO:0000303"/>
    <property type="project" value="ComplexPortal"/>
</dbReference>
<dbReference type="GO" id="GO:0051537">
    <property type="term" value="F:2 iron, 2 sulfur cluster binding"/>
    <property type="evidence" value="ECO:0007669"/>
    <property type="project" value="UniProtKB-KW"/>
</dbReference>
<dbReference type="GO" id="GO:0008695">
    <property type="term" value="F:3-phenylpropionate dioxygenase activity"/>
    <property type="evidence" value="ECO:0007669"/>
    <property type="project" value="UniProtKB-UniRule"/>
</dbReference>
<dbReference type="GO" id="GO:0005506">
    <property type="term" value="F:iron ion binding"/>
    <property type="evidence" value="ECO:0007669"/>
    <property type="project" value="UniProtKB-UniRule"/>
</dbReference>
<dbReference type="GO" id="GO:0019380">
    <property type="term" value="P:3-phenylpropionate catabolic process"/>
    <property type="evidence" value="ECO:0000315"/>
    <property type="project" value="EcoCyc"/>
</dbReference>
<dbReference type="CDD" id="cd08881">
    <property type="entry name" value="RHO_alpha_C_NDO-like"/>
    <property type="match status" value="1"/>
</dbReference>
<dbReference type="FunFam" id="2.102.10.10:FF:000004">
    <property type="entry name" value="3-phenylpropionate/cinnamic acid dioxygenase subunit alpha"/>
    <property type="match status" value="1"/>
</dbReference>
<dbReference type="Gene3D" id="3.90.380.10">
    <property type="entry name" value="Naphthalene 1,2-dioxygenase Alpha Subunit, Chain A, domain 1"/>
    <property type="match status" value="1"/>
</dbReference>
<dbReference type="Gene3D" id="2.102.10.10">
    <property type="entry name" value="Rieske [2Fe-2S] iron-sulphur domain"/>
    <property type="match status" value="1"/>
</dbReference>
<dbReference type="HAMAP" id="MF_01648">
    <property type="entry name" value="HcaE"/>
    <property type="match status" value="1"/>
</dbReference>
<dbReference type="InterPro" id="IPR054883">
    <property type="entry name" value="3PPDioc_HcaE"/>
</dbReference>
<dbReference type="InterPro" id="IPR020875">
    <property type="entry name" value="HcaE"/>
</dbReference>
<dbReference type="InterPro" id="IPR043266">
    <property type="entry name" value="RHO_NdoB-like_C"/>
</dbReference>
<dbReference type="InterPro" id="IPR017941">
    <property type="entry name" value="Rieske_2Fe-2S"/>
</dbReference>
<dbReference type="InterPro" id="IPR036922">
    <property type="entry name" value="Rieske_2Fe-2S_sf"/>
</dbReference>
<dbReference type="InterPro" id="IPR015881">
    <property type="entry name" value="Ring-hydroxy_dOase_2Fe2S_BS"/>
</dbReference>
<dbReference type="InterPro" id="IPR015879">
    <property type="entry name" value="Ring_hydroxy_dOase_asu_C_dom"/>
</dbReference>
<dbReference type="InterPro" id="IPR001663">
    <property type="entry name" value="Rng_hydr_dOase-A"/>
</dbReference>
<dbReference type="NCBIfam" id="NF042946">
    <property type="entry name" value="3PPDioc_HcaE"/>
    <property type="match status" value="1"/>
</dbReference>
<dbReference type="PANTHER" id="PTHR43756:SF1">
    <property type="entry name" value="3-PHENYLPROPIONATE_CINNAMIC ACID DIOXYGENASE SUBUNIT ALPHA"/>
    <property type="match status" value="1"/>
</dbReference>
<dbReference type="PANTHER" id="PTHR43756">
    <property type="entry name" value="CHOLINE MONOOXYGENASE, CHLOROPLASTIC"/>
    <property type="match status" value="1"/>
</dbReference>
<dbReference type="Pfam" id="PF00355">
    <property type="entry name" value="Rieske"/>
    <property type="match status" value="1"/>
</dbReference>
<dbReference type="Pfam" id="PF00848">
    <property type="entry name" value="Ring_hydroxyl_A"/>
    <property type="match status" value="1"/>
</dbReference>
<dbReference type="PRINTS" id="PR00090">
    <property type="entry name" value="RNGDIOXGNASE"/>
</dbReference>
<dbReference type="SUPFAM" id="SSF55961">
    <property type="entry name" value="Bet v1-like"/>
    <property type="match status" value="1"/>
</dbReference>
<dbReference type="SUPFAM" id="SSF50022">
    <property type="entry name" value="ISP domain"/>
    <property type="match status" value="1"/>
</dbReference>
<dbReference type="PROSITE" id="PS51296">
    <property type="entry name" value="RIESKE"/>
    <property type="match status" value="1"/>
</dbReference>
<dbReference type="PROSITE" id="PS00570">
    <property type="entry name" value="RING_HYDROXYL_ALPHA"/>
    <property type="match status" value="1"/>
</dbReference>
<feature type="chain" id="PRO_0000085061" description="3-phenylpropionate/cinnamic acid dioxygenase subunit alpha">
    <location>
        <begin position="1"/>
        <end position="453"/>
    </location>
</feature>
<feature type="domain" description="Rieske">
    <location>
        <begin position="44"/>
        <end position="142"/>
    </location>
</feature>
<feature type="binding site" evidence="1">
    <location>
        <position position="85"/>
    </location>
    <ligand>
        <name>[2Fe-2S] cluster</name>
        <dbReference type="ChEBI" id="CHEBI:190135"/>
    </ligand>
</feature>
<feature type="binding site" evidence="1">
    <location>
        <position position="87"/>
    </location>
    <ligand>
        <name>[2Fe-2S] cluster</name>
        <dbReference type="ChEBI" id="CHEBI:190135"/>
    </ligand>
</feature>
<feature type="binding site" evidence="1">
    <location>
        <position position="105"/>
    </location>
    <ligand>
        <name>[2Fe-2S] cluster</name>
        <dbReference type="ChEBI" id="CHEBI:190135"/>
    </ligand>
</feature>
<feature type="binding site" evidence="1">
    <location>
        <position position="108"/>
    </location>
    <ligand>
        <name>[2Fe-2S] cluster</name>
        <dbReference type="ChEBI" id="CHEBI:190135"/>
    </ligand>
</feature>
<feature type="binding site" evidence="1">
    <location>
        <position position="213"/>
    </location>
    <ligand>
        <name>Fe cation</name>
        <dbReference type="ChEBI" id="CHEBI:24875"/>
    </ligand>
</feature>
<feature type="binding site" evidence="1">
    <location>
        <position position="218"/>
    </location>
    <ligand>
        <name>Fe cation</name>
        <dbReference type="ChEBI" id="CHEBI:24875"/>
    </ligand>
</feature>
<feature type="sequence conflict" description="In Ref. 1; CAA86018." evidence="3" ref="1">
    <original>V</original>
    <variation>A</variation>
    <location>
        <position position="20"/>
    </location>
</feature>
<feature type="sequence conflict" description="In Ref. 1; CAA86018." evidence="3" ref="1">
    <original>GHRARNSKLCLEMGLGQEKRRDDGIPGITNYIFSETAARGMYQRWADLLSSESWQEVLDKTAAYQQEVMK</original>
    <variation>ATAPATANCVWKWGLVRKSAATTAFLALLTISFQKLPLVECTNAGPIF</variation>
    <location>
        <begin position="384"/>
        <end position="453"/>
    </location>
</feature>
<name>HCAE_ECOLI</name>
<sequence length="453" mass="51109">MTTPSDLNIYQLIDTQNGRVTPRIYTDPDIYQLELERIFGRCWLFLAHESQIPKPGDFFNTYMGEDAVVVVRQKDGSIKAFLNQCRHRAMRVSYADCGNTRAFTCPYHGWSYGINGELIDVPLEPRAYPQGLCKSHWGLNEVPCVESYKGLIFGNWDTSAPGLRDYLGDIAWYLDGMLDRREGGTEIVGGVQKWVINCNWKFPAEQFASDQYHALFSHASAVQVLGAKDDGSDKRLGDGQTARPVWETAKDALQFGQDGHGSGFFFTEKPDANVWVDGAVSSYYRETYAEAEQRLGEVRALRLAGHNNIFPTLSWLNGTATLRVWHPRGPDQVEVWAFCITDKAASDEVKAAFENSATRAFGPAGFLEQDDSENWCEIQKLLKGHRARNSKLCLEMGLGQEKRRDDGIPGITNYIFSETAARGMYQRWADLLSSESWQEVLDKTAAYQQEVMK</sequence>